<name>DT3UO_HUMAN</name>
<sequence length="34" mass="4284">MLKMSGWQRQSQNQSWNLRRECSRRKCIFIHHHT</sequence>
<evidence type="ECO:0000250" key="1">
    <source>
        <dbReference type="UniProtKB" id="A0A2R8VHR8"/>
    </source>
</evidence>
<evidence type="ECO:0000269" key="2">
    <source>
    </source>
</evidence>
<evidence type="ECO:0000303" key="3">
    <source>
    </source>
</evidence>
<evidence type="ECO:0000305" key="4"/>
<evidence type="ECO:0000312" key="5">
    <source>
        <dbReference type="HGNC" id="HGNC:2726"/>
    </source>
</evidence>
<comment type="function">
    <molecule>Isoform AltDDIT3</molecule>
    <text evidence="1">Product of the upstream open reading frame (uORF) of DDIT3/CHOP that is specifically produced in absence of stress, thereby preventing translation of downstream stress effector DDIT3/CHOP.</text>
</comment>
<comment type="subunit">
    <molecule>Isoform AltDDIT3</molecule>
    <text evidence="2">Interacts with DDIT3 (isoform 1).</text>
</comment>
<comment type="subcellular location">
    <subcellularLocation>
        <location evidence="2">Nucleus</location>
    </subcellularLocation>
    <subcellularLocation>
        <location evidence="2">Cytoplasm</location>
    </subcellularLocation>
</comment>
<comment type="alternative products">
    <event type="alternative splicing"/>
    <event type="alternative initiation"/>
    <isoform>
        <id>P0DPQ6-1</id>
        <name evidence="3">AltDDIT3</name>
        <sequence type="displayed"/>
    </isoform>
    <isoform>
        <id>P35638-1</id>
        <name>1</name>
        <sequence type="external"/>
    </isoform>
    <isoform>
        <id>P35638-2</id>
        <name>2</name>
        <sequence type="external"/>
    </isoform>
</comment>
<organism>
    <name type="scientific">Homo sapiens</name>
    <name type="common">Human</name>
    <dbReference type="NCBI Taxonomy" id="9606"/>
    <lineage>
        <taxon>Eukaryota</taxon>
        <taxon>Metazoa</taxon>
        <taxon>Chordata</taxon>
        <taxon>Craniata</taxon>
        <taxon>Vertebrata</taxon>
        <taxon>Euteleostomi</taxon>
        <taxon>Mammalia</taxon>
        <taxon>Eutheria</taxon>
        <taxon>Euarchontoglires</taxon>
        <taxon>Primates</taxon>
        <taxon>Haplorrhini</taxon>
        <taxon>Catarrhini</taxon>
        <taxon>Hominidae</taxon>
        <taxon>Homo</taxon>
    </lineage>
</organism>
<keyword id="KW-0024">Alternative initiation</keyword>
<keyword id="KW-0025">Alternative splicing</keyword>
<keyword id="KW-0963">Cytoplasm</keyword>
<keyword id="KW-0539">Nucleus</keyword>
<keyword id="KW-1185">Reference proteome</keyword>
<accession>P0DPQ6</accession>
<gene>
    <name evidence="5" type="primary">DDIT3</name>
</gene>
<reference key="1">
    <citation type="journal article" date="2006" name="Nature">
        <title>The finished DNA sequence of human chromosome 12.</title>
        <authorList>
            <person name="Scherer S.E."/>
            <person name="Muzny D.M."/>
            <person name="Buhay C.J."/>
            <person name="Chen R."/>
            <person name="Cree A."/>
            <person name="Ding Y."/>
            <person name="Dugan-Rocha S."/>
            <person name="Gill R."/>
            <person name="Gunaratne P."/>
            <person name="Harris R.A."/>
            <person name="Hawes A.C."/>
            <person name="Hernandez J."/>
            <person name="Hodgson A.V."/>
            <person name="Hume J."/>
            <person name="Jackson A."/>
            <person name="Khan Z.M."/>
            <person name="Kovar-Smith C."/>
            <person name="Lewis L.R."/>
            <person name="Lozado R.J."/>
            <person name="Metzker M.L."/>
            <person name="Milosavljevic A."/>
            <person name="Miner G.R."/>
            <person name="Montgomery K.T."/>
            <person name="Morgan M.B."/>
            <person name="Nazareth L.V."/>
            <person name="Scott G."/>
            <person name="Sodergren E."/>
            <person name="Song X.-Z."/>
            <person name="Steffen D."/>
            <person name="Lovering R.C."/>
            <person name="Wheeler D.A."/>
            <person name="Worley K.C."/>
            <person name="Yuan Y."/>
            <person name="Zhang Z."/>
            <person name="Adams C.Q."/>
            <person name="Ansari-Lari M.A."/>
            <person name="Ayele M."/>
            <person name="Brown M.J."/>
            <person name="Chen G."/>
            <person name="Chen Z."/>
            <person name="Clerc-Blankenburg K.P."/>
            <person name="Davis C."/>
            <person name="Delgado O."/>
            <person name="Dinh H.H."/>
            <person name="Draper H."/>
            <person name="Gonzalez-Garay M.L."/>
            <person name="Havlak P."/>
            <person name="Jackson L.R."/>
            <person name="Jacob L.S."/>
            <person name="Kelly S.H."/>
            <person name="Li L."/>
            <person name="Li Z."/>
            <person name="Liu J."/>
            <person name="Liu W."/>
            <person name="Lu J."/>
            <person name="Maheshwari M."/>
            <person name="Nguyen B.-V."/>
            <person name="Okwuonu G.O."/>
            <person name="Pasternak S."/>
            <person name="Perez L.M."/>
            <person name="Plopper F.J.H."/>
            <person name="Santibanez J."/>
            <person name="Shen H."/>
            <person name="Tabor P.E."/>
            <person name="Verduzco D."/>
            <person name="Waldron L."/>
            <person name="Wang Q."/>
            <person name="Williams G.A."/>
            <person name="Zhang J."/>
            <person name="Zhou J."/>
            <person name="Allen C.C."/>
            <person name="Amin A.G."/>
            <person name="Anyalebechi V."/>
            <person name="Bailey M."/>
            <person name="Barbaria J.A."/>
            <person name="Bimage K.E."/>
            <person name="Bryant N.P."/>
            <person name="Burch P.E."/>
            <person name="Burkett C.E."/>
            <person name="Burrell K.L."/>
            <person name="Calderon E."/>
            <person name="Cardenas V."/>
            <person name="Carter K."/>
            <person name="Casias K."/>
            <person name="Cavazos I."/>
            <person name="Cavazos S.R."/>
            <person name="Ceasar H."/>
            <person name="Chacko J."/>
            <person name="Chan S.N."/>
            <person name="Chavez D."/>
            <person name="Christopoulos C."/>
            <person name="Chu J."/>
            <person name="Cockrell R."/>
            <person name="Cox C.D."/>
            <person name="Dang M."/>
            <person name="Dathorne S.R."/>
            <person name="David R."/>
            <person name="Davis C.M."/>
            <person name="Davy-Carroll L."/>
            <person name="Deshazo D.R."/>
            <person name="Donlin J.E."/>
            <person name="D'Souza L."/>
            <person name="Eaves K.A."/>
            <person name="Egan A."/>
            <person name="Emery-Cohen A.J."/>
            <person name="Escotto M."/>
            <person name="Flagg N."/>
            <person name="Forbes L.D."/>
            <person name="Gabisi A.M."/>
            <person name="Garza M."/>
            <person name="Hamilton C."/>
            <person name="Henderson N."/>
            <person name="Hernandez O."/>
            <person name="Hines S."/>
            <person name="Hogues M.E."/>
            <person name="Huang M."/>
            <person name="Idlebird D.G."/>
            <person name="Johnson R."/>
            <person name="Jolivet A."/>
            <person name="Jones S."/>
            <person name="Kagan R."/>
            <person name="King L.M."/>
            <person name="Leal B."/>
            <person name="Lebow H."/>
            <person name="Lee S."/>
            <person name="LeVan J.M."/>
            <person name="Lewis L.C."/>
            <person name="London P."/>
            <person name="Lorensuhewa L.M."/>
            <person name="Loulseged H."/>
            <person name="Lovett D.A."/>
            <person name="Lucier A."/>
            <person name="Lucier R.L."/>
            <person name="Ma J."/>
            <person name="Madu R.C."/>
            <person name="Mapua P."/>
            <person name="Martindale A.D."/>
            <person name="Martinez E."/>
            <person name="Massey E."/>
            <person name="Mawhiney S."/>
            <person name="Meador M.G."/>
            <person name="Mendez S."/>
            <person name="Mercado C."/>
            <person name="Mercado I.C."/>
            <person name="Merritt C.E."/>
            <person name="Miner Z.L."/>
            <person name="Minja E."/>
            <person name="Mitchell T."/>
            <person name="Mohabbat F."/>
            <person name="Mohabbat K."/>
            <person name="Montgomery B."/>
            <person name="Moore N."/>
            <person name="Morris S."/>
            <person name="Munidasa M."/>
            <person name="Ngo R.N."/>
            <person name="Nguyen N.B."/>
            <person name="Nickerson E."/>
            <person name="Nwaokelemeh O.O."/>
            <person name="Nwokenkwo S."/>
            <person name="Obregon M."/>
            <person name="Oguh M."/>
            <person name="Oragunye N."/>
            <person name="Oviedo R.J."/>
            <person name="Parish B.J."/>
            <person name="Parker D.N."/>
            <person name="Parrish J."/>
            <person name="Parks K.L."/>
            <person name="Paul H.A."/>
            <person name="Payton B.A."/>
            <person name="Perez A."/>
            <person name="Perrin W."/>
            <person name="Pickens A."/>
            <person name="Primus E.L."/>
            <person name="Pu L.-L."/>
            <person name="Puazo M."/>
            <person name="Quiles M.M."/>
            <person name="Quiroz J.B."/>
            <person name="Rabata D."/>
            <person name="Reeves K."/>
            <person name="Ruiz S.J."/>
            <person name="Shao H."/>
            <person name="Sisson I."/>
            <person name="Sonaike T."/>
            <person name="Sorelle R.P."/>
            <person name="Sutton A.E."/>
            <person name="Svatek A.F."/>
            <person name="Svetz L.A."/>
            <person name="Tamerisa K.S."/>
            <person name="Taylor T.R."/>
            <person name="Teague B."/>
            <person name="Thomas N."/>
            <person name="Thorn R.D."/>
            <person name="Trejos Z.Y."/>
            <person name="Trevino B.K."/>
            <person name="Ukegbu O.N."/>
            <person name="Urban J.B."/>
            <person name="Vasquez L.I."/>
            <person name="Vera V.A."/>
            <person name="Villasana D.M."/>
            <person name="Wang L."/>
            <person name="Ward-Moore S."/>
            <person name="Warren J.T."/>
            <person name="Wei X."/>
            <person name="White F."/>
            <person name="Williamson A.L."/>
            <person name="Wleczyk R."/>
            <person name="Wooden H.S."/>
            <person name="Wooden S.H."/>
            <person name="Yen J."/>
            <person name="Yoon L."/>
            <person name="Yoon V."/>
            <person name="Zorrilla S.E."/>
            <person name="Nelson D."/>
            <person name="Kucherlapati R."/>
            <person name="Weinstock G."/>
            <person name="Gibbs R.A."/>
        </authorList>
    </citation>
    <scope>NUCLEOTIDE SEQUENCE [LARGE SCALE GENOMIC DNA]</scope>
</reference>
<reference key="2">
    <citation type="journal article" date="2017" name="Elife">
        <title>Deep transcriptome annotation enables the discovery and functional characterization of cryptic small proteins.</title>
        <authorList>
            <person name="Samandi S."/>
            <person name="Roy A.V."/>
            <person name="Delcourt V."/>
            <person name="Lucier J.F."/>
            <person name="Gagnon J."/>
            <person name="Beaudoin M.C."/>
            <person name="Vanderperre B."/>
            <person name="Breton M.A."/>
            <person name="Motard J."/>
            <person name="Jacques J.F."/>
            <person name="Brunelle M."/>
            <person name="Gagnon-Arsenault I."/>
            <person name="Fournier I."/>
            <person name="Ouangraoua A."/>
            <person name="Hunting D.J."/>
            <person name="Cohen A.A."/>
            <person name="Landry C.R."/>
            <person name="Scott M.S."/>
            <person name="Roucou X."/>
        </authorList>
    </citation>
    <scope>SUBCELLULAR LOCATION</scope>
    <scope>ALTERNATIVE INITIATION (ISOFORM ALTDDIT3)</scope>
    <scope>SUBUNIT</scope>
</reference>
<proteinExistence type="evidence at protein level"/>
<dbReference type="EMBL" id="AC022506">
    <property type="status" value="NOT_ANNOTATED_CDS"/>
    <property type="molecule type" value="Genomic_DNA"/>
</dbReference>
<dbReference type="Antibodypedia" id="81996">
    <property type="antibodies" value="1 antibodies from 1 providers"/>
</dbReference>
<dbReference type="MANE-Select" id="ENST00000642841.1">
    <property type="protein sequence ID" value="ENSP00000494177.1"/>
    <property type="RefSeq nucleotide sequence ID" value="NM_001414991.1"/>
    <property type="RefSeq protein sequence ID" value="NP_001401920.1"/>
</dbReference>
<dbReference type="AGR" id="HGNC:2726"/>
<dbReference type="GeneCards" id="DDIT3"/>
<dbReference type="HGNC" id="HGNC:2726">
    <property type="gene designation" value="DDIT3"/>
</dbReference>
<dbReference type="HPA" id="ENSG00000285133">
    <property type="expression patterns" value="Tissue enhanced (intestine, skeletal muscle, stomach)"/>
</dbReference>
<dbReference type="MalaCards" id="DDIT3"/>
<dbReference type="neXtProt" id="NX_P0DPQ6"/>
<dbReference type="VEuPathDB" id="HostDB:ENSG00000285133"/>
<dbReference type="GeneTree" id="ENSGT01010000223049"/>
<dbReference type="OrthoDB" id="9753710at2759"/>
<dbReference type="PathwayCommons" id="P0DPQ6"/>
<dbReference type="ChiTaRS" id="DDIT3">
    <property type="organism name" value="human"/>
</dbReference>
<dbReference type="Pharos" id="P0DPQ6">
    <property type="development level" value="Tbio"/>
</dbReference>
<dbReference type="Proteomes" id="UP000005640">
    <property type="component" value="Unplaced"/>
</dbReference>
<dbReference type="GO" id="GO:0005737">
    <property type="term" value="C:cytoplasm"/>
    <property type="evidence" value="ECO:0000314"/>
    <property type="project" value="UniProtKB"/>
</dbReference>
<dbReference type="GO" id="GO:0005770">
    <property type="term" value="C:late endosome"/>
    <property type="evidence" value="ECO:0007669"/>
    <property type="project" value="Ensembl"/>
</dbReference>
<dbReference type="GO" id="GO:0005634">
    <property type="term" value="C:nucleus"/>
    <property type="evidence" value="ECO:0000314"/>
    <property type="project" value="UniProtKB"/>
</dbReference>
<dbReference type="GO" id="GO:0003677">
    <property type="term" value="F:DNA binding"/>
    <property type="evidence" value="ECO:0007669"/>
    <property type="project" value="Ensembl"/>
</dbReference>
<dbReference type="GO" id="GO:0003700">
    <property type="term" value="F:DNA-binding transcription factor activity"/>
    <property type="evidence" value="ECO:0007669"/>
    <property type="project" value="Ensembl"/>
</dbReference>
<dbReference type="GO" id="GO:0060840">
    <property type="term" value="P:artery development"/>
    <property type="evidence" value="ECO:0007669"/>
    <property type="project" value="Ensembl"/>
</dbReference>
<dbReference type="GO" id="GO:0070509">
    <property type="term" value="P:calcium ion import"/>
    <property type="evidence" value="ECO:0007669"/>
    <property type="project" value="Ensembl"/>
</dbReference>
<dbReference type="GO" id="GO:0002086">
    <property type="term" value="P:diaphragm contraction"/>
    <property type="evidence" value="ECO:0007669"/>
    <property type="project" value="Ensembl"/>
</dbReference>
<dbReference type="GO" id="GO:0030968">
    <property type="term" value="P:endoplasmic reticulum unfolded protein response"/>
    <property type="evidence" value="ECO:0007669"/>
    <property type="project" value="Ensembl"/>
</dbReference>
<dbReference type="GO" id="GO:0006983">
    <property type="term" value="P:ER overload response"/>
    <property type="evidence" value="ECO:0007669"/>
    <property type="project" value="Ensembl"/>
</dbReference>
<dbReference type="GO" id="GO:0010467">
    <property type="term" value="P:gene expression"/>
    <property type="evidence" value="ECO:0007669"/>
    <property type="project" value="Ensembl"/>
</dbReference>
<dbReference type="GO" id="GO:0070059">
    <property type="term" value="P:intrinsic apoptotic signaling pathway in response to endoplasmic reticulum stress"/>
    <property type="evidence" value="ECO:0007669"/>
    <property type="project" value="Ensembl"/>
</dbReference>
<dbReference type="GO" id="GO:0045599">
    <property type="term" value="P:negative regulation of fat cell differentiation"/>
    <property type="evidence" value="ECO:0007669"/>
    <property type="project" value="Ensembl"/>
</dbReference>
<dbReference type="GO" id="GO:0036119">
    <property type="term" value="P:response to platelet-derived growth factor"/>
    <property type="evidence" value="ECO:0007669"/>
    <property type="project" value="Ensembl"/>
</dbReference>
<dbReference type="GO" id="GO:0009611">
    <property type="term" value="P:response to wounding"/>
    <property type="evidence" value="ECO:0007669"/>
    <property type="project" value="Ensembl"/>
</dbReference>
<dbReference type="GO" id="GO:0007605">
    <property type="term" value="P:sensory perception of sound"/>
    <property type="evidence" value="ECO:0007669"/>
    <property type="project" value="Ensembl"/>
</dbReference>
<dbReference type="GO" id="GO:1904738">
    <property type="term" value="P:vascular associated smooth muscle cell migration"/>
    <property type="evidence" value="ECO:0007669"/>
    <property type="project" value="Ensembl"/>
</dbReference>
<dbReference type="GO" id="GO:1990874">
    <property type="term" value="P:vascular associated smooth muscle cell proliferation"/>
    <property type="evidence" value="ECO:0007669"/>
    <property type="project" value="Ensembl"/>
</dbReference>
<feature type="chain" id="PRO_0000445431" description="DDIT3 upstream open reading frame protein">
    <location>
        <begin position="1"/>
        <end position="34"/>
    </location>
</feature>
<protein>
    <recommendedName>
        <fullName evidence="4">DDIT3 upstream open reading frame protein</fullName>
    </recommendedName>
    <alternativeName>
        <fullName evidence="3 4">Alternative DDIT3 protein</fullName>
        <shortName evidence="3">AltDDIT3</shortName>
    </alternativeName>
</protein>